<gene>
    <name type="primary">Irf2bpl</name>
    <name type="synonym">Eap1</name>
    <name type="synonym">Kiaa1865</name>
</gene>
<name>I2BPL_MOUSE</name>
<reference key="1">
    <citation type="submission" date="2002-06" db="EMBL/GenBank/DDBJ databases">
        <authorList>
            <person name="Chen X.G."/>
            <person name="Li Y."/>
        </authorList>
    </citation>
    <scope>NUCLEOTIDE SEQUENCE [MRNA]</scope>
    <source>
        <strain>BALB/cJ</strain>
        <tissue>Heart</tissue>
    </source>
</reference>
<reference key="2">
    <citation type="journal article" date="2004" name="DNA Res.">
        <title>Prediction of the coding sequences of mouse homologues of KIAA gene: IV. The complete nucleotide sequences of 500 mouse KIAA-homologous cDNAs identified by screening of terminal sequences of cDNA clones randomly sampled from size-fractionated libraries.</title>
        <authorList>
            <person name="Okazaki N."/>
            <person name="Kikuno R."/>
            <person name="Ohara R."/>
            <person name="Inamoto S."/>
            <person name="Koseki H."/>
            <person name="Hiraoka S."/>
            <person name="Saga Y."/>
            <person name="Seino S."/>
            <person name="Nishimura M."/>
            <person name="Kaisho T."/>
            <person name="Hoshino K."/>
            <person name="Kitamura H."/>
            <person name="Nagase T."/>
            <person name="Ohara O."/>
            <person name="Koga H."/>
        </authorList>
    </citation>
    <scope>NUCLEOTIDE SEQUENCE [LARGE SCALE MRNA]</scope>
    <source>
        <tissue>Fetal brain</tissue>
    </source>
</reference>
<reference key="3">
    <citation type="journal article" date="2005" name="Science">
        <title>The transcriptional landscape of the mammalian genome.</title>
        <authorList>
            <person name="Carninci P."/>
            <person name="Kasukawa T."/>
            <person name="Katayama S."/>
            <person name="Gough J."/>
            <person name="Frith M.C."/>
            <person name="Maeda N."/>
            <person name="Oyama R."/>
            <person name="Ravasi T."/>
            <person name="Lenhard B."/>
            <person name="Wells C."/>
            <person name="Kodzius R."/>
            <person name="Shimokawa K."/>
            <person name="Bajic V.B."/>
            <person name="Brenner S.E."/>
            <person name="Batalov S."/>
            <person name="Forrest A.R."/>
            <person name="Zavolan M."/>
            <person name="Davis M.J."/>
            <person name="Wilming L.G."/>
            <person name="Aidinis V."/>
            <person name="Allen J.E."/>
            <person name="Ambesi-Impiombato A."/>
            <person name="Apweiler R."/>
            <person name="Aturaliya R.N."/>
            <person name="Bailey T.L."/>
            <person name="Bansal M."/>
            <person name="Baxter L."/>
            <person name="Beisel K.W."/>
            <person name="Bersano T."/>
            <person name="Bono H."/>
            <person name="Chalk A.M."/>
            <person name="Chiu K.P."/>
            <person name="Choudhary V."/>
            <person name="Christoffels A."/>
            <person name="Clutterbuck D.R."/>
            <person name="Crowe M.L."/>
            <person name="Dalla E."/>
            <person name="Dalrymple B.P."/>
            <person name="de Bono B."/>
            <person name="Della Gatta G."/>
            <person name="di Bernardo D."/>
            <person name="Down T."/>
            <person name="Engstrom P."/>
            <person name="Fagiolini M."/>
            <person name="Faulkner G."/>
            <person name="Fletcher C.F."/>
            <person name="Fukushima T."/>
            <person name="Furuno M."/>
            <person name="Futaki S."/>
            <person name="Gariboldi M."/>
            <person name="Georgii-Hemming P."/>
            <person name="Gingeras T.R."/>
            <person name="Gojobori T."/>
            <person name="Green R.E."/>
            <person name="Gustincich S."/>
            <person name="Harbers M."/>
            <person name="Hayashi Y."/>
            <person name="Hensch T.K."/>
            <person name="Hirokawa N."/>
            <person name="Hill D."/>
            <person name="Huminiecki L."/>
            <person name="Iacono M."/>
            <person name="Ikeo K."/>
            <person name="Iwama A."/>
            <person name="Ishikawa T."/>
            <person name="Jakt M."/>
            <person name="Kanapin A."/>
            <person name="Katoh M."/>
            <person name="Kawasawa Y."/>
            <person name="Kelso J."/>
            <person name="Kitamura H."/>
            <person name="Kitano H."/>
            <person name="Kollias G."/>
            <person name="Krishnan S.P."/>
            <person name="Kruger A."/>
            <person name="Kummerfeld S.K."/>
            <person name="Kurochkin I.V."/>
            <person name="Lareau L.F."/>
            <person name="Lazarevic D."/>
            <person name="Lipovich L."/>
            <person name="Liu J."/>
            <person name="Liuni S."/>
            <person name="McWilliam S."/>
            <person name="Madan Babu M."/>
            <person name="Madera M."/>
            <person name="Marchionni L."/>
            <person name="Matsuda H."/>
            <person name="Matsuzawa S."/>
            <person name="Miki H."/>
            <person name="Mignone F."/>
            <person name="Miyake S."/>
            <person name="Morris K."/>
            <person name="Mottagui-Tabar S."/>
            <person name="Mulder N."/>
            <person name="Nakano N."/>
            <person name="Nakauchi H."/>
            <person name="Ng P."/>
            <person name="Nilsson R."/>
            <person name="Nishiguchi S."/>
            <person name="Nishikawa S."/>
            <person name="Nori F."/>
            <person name="Ohara O."/>
            <person name="Okazaki Y."/>
            <person name="Orlando V."/>
            <person name="Pang K.C."/>
            <person name="Pavan W.J."/>
            <person name="Pavesi G."/>
            <person name="Pesole G."/>
            <person name="Petrovsky N."/>
            <person name="Piazza S."/>
            <person name="Reed J."/>
            <person name="Reid J.F."/>
            <person name="Ring B.Z."/>
            <person name="Ringwald M."/>
            <person name="Rost B."/>
            <person name="Ruan Y."/>
            <person name="Salzberg S.L."/>
            <person name="Sandelin A."/>
            <person name="Schneider C."/>
            <person name="Schoenbach C."/>
            <person name="Sekiguchi K."/>
            <person name="Semple C.A."/>
            <person name="Seno S."/>
            <person name="Sessa L."/>
            <person name="Sheng Y."/>
            <person name="Shibata Y."/>
            <person name="Shimada H."/>
            <person name="Shimada K."/>
            <person name="Silva D."/>
            <person name="Sinclair B."/>
            <person name="Sperling S."/>
            <person name="Stupka E."/>
            <person name="Sugiura K."/>
            <person name="Sultana R."/>
            <person name="Takenaka Y."/>
            <person name="Taki K."/>
            <person name="Tammoja K."/>
            <person name="Tan S.L."/>
            <person name="Tang S."/>
            <person name="Taylor M.S."/>
            <person name="Tegner J."/>
            <person name="Teichmann S.A."/>
            <person name="Ueda H.R."/>
            <person name="van Nimwegen E."/>
            <person name="Verardo R."/>
            <person name="Wei C.L."/>
            <person name="Yagi K."/>
            <person name="Yamanishi H."/>
            <person name="Zabarovsky E."/>
            <person name="Zhu S."/>
            <person name="Zimmer A."/>
            <person name="Hide W."/>
            <person name="Bult C."/>
            <person name="Grimmond S.M."/>
            <person name="Teasdale R.D."/>
            <person name="Liu E.T."/>
            <person name="Brusic V."/>
            <person name="Quackenbush J."/>
            <person name="Wahlestedt C."/>
            <person name="Mattick J.S."/>
            <person name="Hume D.A."/>
            <person name="Kai C."/>
            <person name="Sasaki D."/>
            <person name="Tomaru Y."/>
            <person name="Fukuda S."/>
            <person name="Kanamori-Katayama M."/>
            <person name="Suzuki M."/>
            <person name="Aoki J."/>
            <person name="Arakawa T."/>
            <person name="Iida J."/>
            <person name="Imamura K."/>
            <person name="Itoh M."/>
            <person name="Kato T."/>
            <person name="Kawaji H."/>
            <person name="Kawagashira N."/>
            <person name="Kawashima T."/>
            <person name="Kojima M."/>
            <person name="Kondo S."/>
            <person name="Konno H."/>
            <person name="Nakano K."/>
            <person name="Ninomiya N."/>
            <person name="Nishio T."/>
            <person name="Okada M."/>
            <person name="Plessy C."/>
            <person name="Shibata K."/>
            <person name="Shiraki T."/>
            <person name="Suzuki S."/>
            <person name="Tagami M."/>
            <person name="Waki K."/>
            <person name="Watahiki A."/>
            <person name="Okamura-Oho Y."/>
            <person name="Suzuki H."/>
            <person name="Kawai J."/>
            <person name="Hayashizaki Y."/>
        </authorList>
    </citation>
    <scope>NUCLEOTIDE SEQUENCE [LARGE SCALE MRNA]</scope>
    <source>
        <strain>C57BL/6J</strain>
        <strain>NOD</strain>
        <tissue>Dendritic cell</tissue>
        <tissue>Eye</tissue>
        <tissue>Medulla oblongata</tissue>
        <tissue>Olfactory bulb</tissue>
    </source>
</reference>
<reference key="4">
    <citation type="journal article" date="2004" name="Genome Res.">
        <title>The status, quality, and expansion of the NIH full-length cDNA project: the Mammalian Gene Collection (MGC).</title>
        <authorList>
            <consortium name="The MGC Project Team"/>
        </authorList>
    </citation>
    <scope>NUCLEOTIDE SEQUENCE [LARGE SCALE MRNA]</scope>
    <source>
        <strain>C57BL/6J</strain>
        <tissue>Brain</tissue>
    </source>
</reference>
<reference key="5">
    <citation type="journal article" date="2004" name="Mol. Cell. Proteomics">
        <title>Phosphoproteomic analysis of the developing mouse brain.</title>
        <authorList>
            <person name="Ballif B.A."/>
            <person name="Villen J."/>
            <person name="Beausoleil S.A."/>
            <person name="Schwartz D."/>
            <person name="Gygi S.P."/>
        </authorList>
    </citation>
    <scope>IDENTIFICATION BY MASS SPECTROMETRY [LARGE SCALE ANALYSIS]</scope>
    <source>
        <tissue>Embryonic brain</tissue>
    </source>
</reference>
<reference key="6">
    <citation type="journal article" date="2007" name="Proc. Natl. Acad. Sci. U.S.A.">
        <title>Large-scale phosphorylation analysis of mouse liver.</title>
        <authorList>
            <person name="Villen J."/>
            <person name="Beausoleil S.A."/>
            <person name="Gerber S.A."/>
            <person name="Gygi S.P."/>
        </authorList>
    </citation>
    <scope>PHOSPHORYLATION [LARGE SCALE ANALYSIS] AT SER-636; SER-638 AND SER-641</scope>
    <scope>IDENTIFICATION BY MASS SPECTROMETRY [LARGE SCALE ANALYSIS]</scope>
    <source>
        <tissue>Liver</tissue>
    </source>
</reference>
<reference key="7">
    <citation type="journal article" date="2009" name="Immunity">
        <title>The phagosomal proteome in interferon-gamma-activated macrophages.</title>
        <authorList>
            <person name="Trost M."/>
            <person name="English L."/>
            <person name="Lemieux S."/>
            <person name="Courcelles M."/>
            <person name="Desjardins M."/>
            <person name="Thibault P."/>
        </authorList>
    </citation>
    <scope>PHOSPHORYLATION [LARGE SCALE ANALYSIS] AT SER-526</scope>
    <scope>IDENTIFICATION BY MASS SPECTROMETRY [LARGE SCALE ANALYSIS]</scope>
</reference>
<reference key="8">
    <citation type="journal article" date="2010" name="Cell">
        <title>A tissue-specific atlas of mouse protein phosphorylation and expression.</title>
        <authorList>
            <person name="Huttlin E.L."/>
            <person name="Jedrychowski M.P."/>
            <person name="Elias J.E."/>
            <person name="Goswami T."/>
            <person name="Rad R."/>
            <person name="Beausoleil S.A."/>
            <person name="Villen J."/>
            <person name="Haas W."/>
            <person name="Sowa M.E."/>
            <person name="Gygi S.P."/>
        </authorList>
    </citation>
    <scope>PHOSPHORYLATION [LARGE SCALE ANALYSIS] AT SER-195; SER-526; SER-636; SER-638 AND SER-641</scope>
    <scope>IDENTIFICATION BY MASS SPECTROMETRY [LARGE SCALE ANALYSIS]</scope>
    <source>
        <tissue>Brain</tissue>
        <tissue>Brown adipose tissue</tissue>
        <tissue>Heart</tissue>
        <tissue>Kidney</tissue>
        <tissue>Liver</tissue>
        <tissue>Lung</tissue>
        <tissue>Pancreas</tissue>
        <tissue>Spleen</tissue>
        <tissue>Testis</tissue>
    </source>
</reference>
<proteinExistence type="evidence at protein level"/>
<accession>Q8K3X4</accession>
<accession>Q3TBU9</accession>
<accession>Q3U483</accession>
<accession>Q3USE5</accession>
<accession>Q69Z84</accession>
<accession>Q8BUS1</accession>
<accession>Q8C011</accession>
<evidence type="ECO:0000250" key="1">
    <source>
        <dbReference type="UniProtKB" id="Q2MJS2"/>
    </source>
</evidence>
<evidence type="ECO:0000250" key="2">
    <source>
        <dbReference type="UniProtKB" id="Q5EIC4"/>
    </source>
</evidence>
<evidence type="ECO:0000250" key="3">
    <source>
        <dbReference type="UniProtKB" id="Q9H1B7"/>
    </source>
</evidence>
<evidence type="ECO:0000255" key="4"/>
<evidence type="ECO:0000256" key="5">
    <source>
        <dbReference type="SAM" id="MobiDB-lite"/>
    </source>
</evidence>
<evidence type="ECO:0000305" key="6"/>
<evidence type="ECO:0007744" key="7">
    <source>
    </source>
</evidence>
<evidence type="ECO:0007744" key="8">
    <source>
    </source>
</evidence>
<evidence type="ECO:0007744" key="9">
    <source>
    </source>
</evidence>
<keyword id="KW-0175">Coiled coil</keyword>
<keyword id="KW-1017">Isopeptide bond</keyword>
<keyword id="KW-0479">Metal-binding</keyword>
<keyword id="KW-0539">Nucleus</keyword>
<keyword id="KW-0597">Phosphoprotein</keyword>
<keyword id="KW-1185">Reference proteome</keyword>
<keyword id="KW-0808">Transferase</keyword>
<keyword id="KW-0832">Ubl conjugation</keyword>
<keyword id="KW-0862">Zinc</keyword>
<keyword id="KW-0863">Zinc-finger</keyword>
<dbReference type="EC" id="2.3.2.27" evidence="3"/>
<dbReference type="EMBL" id="AF525300">
    <property type="protein sequence ID" value="AAM82165.1"/>
    <property type="molecule type" value="mRNA"/>
</dbReference>
<dbReference type="EMBL" id="AK173282">
    <property type="protein sequence ID" value="BAD32560.1"/>
    <property type="status" value="ALT_INIT"/>
    <property type="molecule type" value="mRNA"/>
</dbReference>
<dbReference type="EMBL" id="AK032366">
    <property type="protein sequence ID" value="BAC27837.1"/>
    <property type="molecule type" value="mRNA"/>
</dbReference>
<dbReference type="EMBL" id="AK032622">
    <property type="protein sequence ID" value="BAC27955.1"/>
    <property type="molecule type" value="mRNA"/>
</dbReference>
<dbReference type="EMBL" id="AK082791">
    <property type="protein sequence ID" value="BAC38621.1"/>
    <property type="molecule type" value="mRNA"/>
</dbReference>
<dbReference type="EMBL" id="AK140441">
    <property type="protein sequence ID" value="BAE24388.1"/>
    <property type="molecule type" value="mRNA"/>
</dbReference>
<dbReference type="EMBL" id="AK154383">
    <property type="protein sequence ID" value="BAE32550.1"/>
    <property type="molecule type" value="mRNA"/>
</dbReference>
<dbReference type="EMBL" id="AK155373">
    <property type="protein sequence ID" value="BAE33226.1"/>
    <property type="molecule type" value="mRNA"/>
</dbReference>
<dbReference type="EMBL" id="AK171043">
    <property type="protein sequence ID" value="BAE42208.1"/>
    <property type="molecule type" value="mRNA"/>
</dbReference>
<dbReference type="EMBL" id="BC057128">
    <property type="protein sequence ID" value="AAH57128.1"/>
    <property type="molecule type" value="mRNA"/>
</dbReference>
<dbReference type="EMBL" id="BC063253">
    <property type="protein sequence ID" value="AAH63253.1"/>
    <property type="molecule type" value="mRNA"/>
</dbReference>
<dbReference type="CCDS" id="CCDS26068.1"/>
<dbReference type="RefSeq" id="NP_665835.1">
    <property type="nucleotide sequence ID" value="NM_145836.2"/>
</dbReference>
<dbReference type="SMR" id="Q8K3X4"/>
<dbReference type="BioGRID" id="231970">
    <property type="interactions" value="9"/>
</dbReference>
<dbReference type="FunCoup" id="Q8K3X4">
    <property type="interactions" value="3775"/>
</dbReference>
<dbReference type="STRING" id="10090.ENSMUSP00000041070"/>
<dbReference type="GlyGen" id="Q8K3X4">
    <property type="glycosylation" value="7 sites, 1 O-linked glycan (6 sites)"/>
</dbReference>
<dbReference type="iPTMnet" id="Q8K3X4"/>
<dbReference type="PhosphoSitePlus" id="Q8K3X4"/>
<dbReference type="SwissPalm" id="Q8K3X4"/>
<dbReference type="jPOST" id="Q8K3X4"/>
<dbReference type="PaxDb" id="10090-ENSMUSP00000041070"/>
<dbReference type="PeptideAtlas" id="Q8K3X4"/>
<dbReference type="ProteomicsDB" id="267034"/>
<dbReference type="Pumba" id="Q8K3X4"/>
<dbReference type="Antibodypedia" id="54435">
    <property type="antibodies" value="11 antibodies from 7 providers"/>
</dbReference>
<dbReference type="DNASU" id="238330"/>
<dbReference type="Ensembl" id="ENSMUST00000038422.8">
    <property type="protein sequence ID" value="ENSMUSP00000041070.7"/>
    <property type="gene ID" value="ENSMUSG00000034168.8"/>
</dbReference>
<dbReference type="GeneID" id="238330"/>
<dbReference type="KEGG" id="mmu:238330"/>
<dbReference type="UCSC" id="uc007oia.2">
    <property type="organism name" value="mouse"/>
</dbReference>
<dbReference type="AGR" id="MGI:2442463"/>
<dbReference type="CTD" id="64207"/>
<dbReference type="MGI" id="MGI:2442463">
    <property type="gene designation" value="Irf2bpl"/>
</dbReference>
<dbReference type="VEuPathDB" id="HostDB:ENSMUSG00000034168"/>
<dbReference type="eggNOG" id="KOG3579">
    <property type="taxonomic scope" value="Eukaryota"/>
</dbReference>
<dbReference type="GeneTree" id="ENSGT00940000162596"/>
<dbReference type="HOGENOM" id="CLU_019307_1_0_1"/>
<dbReference type="InParanoid" id="Q8K3X4"/>
<dbReference type="OMA" id="GAQMNVP"/>
<dbReference type="OrthoDB" id="45007at2759"/>
<dbReference type="PhylomeDB" id="Q8K3X4"/>
<dbReference type="TreeFam" id="TF317075"/>
<dbReference type="UniPathway" id="UPA00143"/>
<dbReference type="BioGRID-ORCS" id="238330">
    <property type="hits" value="1 hit in 77 CRISPR screens"/>
</dbReference>
<dbReference type="ChiTaRS" id="Irf2bpl">
    <property type="organism name" value="mouse"/>
</dbReference>
<dbReference type="PRO" id="PR:Q8K3X4"/>
<dbReference type="Proteomes" id="UP000000589">
    <property type="component" value="Chromosome 12"/>
</dbReference>
<dbReference type="RNAct" id="Q8K3X4">
    <property type="molecule type" value="protein"/>
</dbReference>
<dbReference type="Bgee" id="ENSMUSG00000034168">
    <property type="expression patterns" value="Expressed in dorsal pancreas and 224 other cell types or tissues"/>
</dbReference>
<dbReference type="GO" id="GO:0005654">
    <property type="term" value="C:nucleoplasm"/>
    <property type="evidence" value="ECO:0007669"/>
    <property type="project" value="Ensembl"/>
</dbReference>
<dbReference type="GO" id="GO:0005634">
    <property type="term" value="C:nucleus"/>
    <property type="evidence" value="ECO:0000250"/>
    <property type="project" value="ParkinsonsUK-UCL"/>
</dbReference>
<dbReference type="GO" id="GO:0061630">
    <property type="term" value="F:ubiquitin protein ligase activity"/>
    <property type="evidence" value="ECO:0000250"/>
    <property type="project" value="UniProtKB"/>
</dbReference>
<dbReference type="GO" id="GO:0008270">
    <property type="term" value="F:zinc ion binding"/>
    <property type="evidence" value="ECO:0007669"/>
    <property type="project" value="UniProtKB-KW"/>
</dbReference>
<dbReference type="GO" id="GO:0000122">
    <property type="term" value="P:negative regulation of transcription by RNA polymerase II"/>
    <property type="evidence" value="ECO:0007669"/>
    <property type="project" value="Ensembl"/>
</dbReference>
<dbReference type="GO" id="GO:0007399">
    <property type="term" value="P:nervous system development"/>
    <property type="evidence" value="ECO:0007669"/>
    <property type="project" value="Ensembl"/>
</dbReference>
<dbReference type="GO" id="GO:0045944">
    <property type="term" value="P:positive regulation of transcription by RNA polymerase II"/>
    <property type="evidence" value="ECO:0007669"/>
    <property type="project" value="Ensembl"/>
</dbReference>
<dbReference type="GO" id="GO:0016567">
    <property type="term" value="P:protein ubiquitination"/>
    <property type="evidence" value="ECO:0007669"/>
    <property type="project" value="UniProtKB-UniPathway"/>
</dbReference>
<dbReference type="CDD" id="cd16717">
    <property type="entry name" value="vRING-HC_IRF2BPL"/>
    <property type="match status" value="1"/>
</dbReference>
<dbReference type="FunFam" id="1.10.10.1580:FF:000001">
    <property type="entry name" value="interferon regulatory factor 2-binding protein 2"/>
    <property type="match status" value="1"/>
</dbReference>
<dbReference type="Gene3D" id="1.10.10.1580">
    <property type="entry name" value="Interferon regulatory factor 2-binding protein"/>
    <property type="match status" value="1"/>
</dbReference>
<dbReference type="InterPro" id="IPR044882">
    <property type="entry name" value="I2BP1/2_C3HC4-RING_sf"/>
</dbReference>
<dbReference type="InterPro" id="IPR022750">
    <property type="entry name" value="Interferon_reg_fac2-bd1_2_Znf"/>
</dbReference>
<dbReference type="PANTHER" id="PTHR10816:SF14">
    <property type="entry name" value="E3 UBIQUITIN-PROTEIN LIGASE IRF2BPL-RELATED"/>
    <property type="match status" value="1"/>
</dbReference>
<dbReference type="PANTHER" id="PTHR10816">
    <property type="entry name" value="MYELIN TRANSCRIPTION FACTOR 1-RELATED"/>
    <property type="match status" value="1"/>
</dbReference>
<dbReference type="Pfam" id="PF11261">
    <property type="entry name" value="IRF-2BP1_2"/>
    <property type="match status" value="1"/>
</dbReference>
<dbReference type="Pfam" id="PF25457">
    <property type="entry name" value="IRF-2BP1_2_M"/>
    <property type="match status" value="1"/>
</dbReference>
<dbReference type="Pfam" id="PF25454">
    <property type="entry name" value="zf-C3HC4_IRF-2BP1_2"/>
    <property type="match status" value="1"/>
</dbReference>
<dbReference type="SUPFAM" id="SSF57850">
    <property type="entry name" value="RING/U-box"/>
    <property type="match status" value="1"/>
</dbReference>
<organism>
    <name type="scientific">Mus musculus</name>
    <name type="common">Mouse</name>
    <dbReference type="NCBI Taxonomy" id="10090"/>
    <lineage>
        <taxon>Eukaryota</taxon>
        <taxon>Metazoa</taxon>
        <taxon>Chordata</taxon>
        <taxon>Craniata</taxon>
        <taxon>Vertebrata</taxon>
        <taxon>Euteleostomi</taxon>
        <taxon>Mammalia</taxon>
        <taxon>Eutheria</taxon>
        <taxon>Euarchontoglires</taxon>
        <taxon>Glires</taxon>
        <taxon>Rodentia</taxon>
        <taxon>Myomorpha</taxon>
        <taxon>Muroidea</taxon>
        <taxon>Muridae</taxon>
        <taxon>Murinae</taxon>
        <taxon>Mus</taxon>
        <taxon>Mus</taxon>
    </lineage>
</organism>
<sequence length="775" mass="80565">MSAAQVSSSRRQSCYLCDLPRMPWAMIWDFSEPVCRGCVNYEGADRIEFVIETARQLKRAHGCFQDGRSPGPPPPVGVKTVALSAKEAAAAAAAAQQQQQQQQQQQQQLNHVDGSTKPAVLAAPSGLERYGLSAAAAAAAAAAAVEQRSRFEYPPPPVSLGSSSHAARLPNGLGGPNGFPKPAPEEGPPELNRQSPNSSSAATSVASRRGTHSGLVTGLPNPGGGGGPQLTVPPNLLPQTLLNGPASAAVLPPPHGLGGSRGPPTPAPPGAPGGPACLGGPPGVSATVSSAPSSTSSTVAEVGVGAAGKRPGSVSSTDQERELKEKQRNAEALAELSESLRNRAEEWANKPKMVRDTLLTLAGCTPYEVRFKKDHSLLGRVFAFDAVSKPGMDYELKLFIEYPTGSGNVYSSASGVAKQMYQDCMKDFGRGLSSGFKYLEYEKKHGSGDWRLLGDLLPEAVRFFKEGVPGADMLPQPYLDASCPMLPTALVSLSRAPSAPPGTGALPPAAPTGRGAASSLRKRKASPEPPDSAESALKLGEEQQRQQWMANQSEALKLTMSAGGFAAPGHSAGGPPPPPPPLGPHSNRTTPPESAPQNGPSPMAALMSVADTLGTAHSPKDGSSVHSTTASARRNSSSPVSPASVPGQRRLASRNGDLNLQVAPPPPSAHPGMDQVHPQNIPDSPMANSGPLCCTICHERLEDTHFVQCPSVPSHKFCFPCSRESIKAQGATGEVYCPSGEKCPLVGSNVPWAFMQGEIATILAGDVKVKKERDP</sequence>
<protein>
    <recommendedName>
        <fullName evidence="3">Probable E3 ubiquitin-protein ligase IRF2BPL</fullName>
        <ecNumber evidence="3">2.3.2.27</ecNumber>
    </recommendedName>
    <alternativeName>
        <fullName>Enhanced at puberty protein 1</fullName>
    </alternativeName>
    <alternativeName>
        <fullName>Interferon regulatory factor 2-binding protein-like</fullName>
    </alternativeName>
</protein>
<feature type="chain" id="PRO_0000056412" description="Probable E3 ubiquitin-protein ligase IRF2BPL">
    <location>
        <begin position="1"/>
        <end position="775"/>
    </location>
</feature>
<feature type="zinc finger region" description="RING-type; degenerate">
    <location>
        <begin position="694"/>
        <end position="741"/>
    </location>
</feature>
<feature type="region of interest" description="Disordered" evidence="5">
    <location>
        <begin position="93"/>
        <end position="112"/>
    </location>
</feature>
<feature type="region of interest" description="Disordered" evidence="5">
    <location>
        <begin position="154"/>
        <end position="322"/>
    </location>
</feature>
<feature type="region of interest" description="Disordered" evidence="5">
    <location>
        <begin position="494"/>
        <end position="536"/>
    </location>
</feature>
<feature type="region of interest" description="Disordered" evidence="5">
    <location>
        <begin position="563"/>
        <end position="684"/>
    </location>
</feature>
<feature type="coiled-coil region" evidence="4">
    <location>
        <begin position="83"/>
        <end position="113"/>
    </location>
</feature>
<feature type="coiled-coil region" evidence="4">
    <location>
        <begin position="314"/>
        <end position="350"/>
    </location>
</feature>
<feature type="compositionally biased region" description="Low complexity" evidence="5">
    <location>
        <begin position="93"/>
        <end position="108"/>
    </location>
</feature>
<feature type="compositionally biased region" description="Low complexity" evidence="5">
    <location>
        <begin position="195"/>
        <end position="207"/>
    </location>
</feature>
<feature type="compositionally biased region" description="Pro residues" evidence="5">
    <location>
        <begin position="263"/>
        <end position="272"/>
    </location>
</feature>
<feature type="compositionally biased region" description="Low complexity" evidence="5">
    <location>
        <begin position="283"/>
        <end position="300"/>
    </location>
</feature>
<feature type="compositionally biased region" description="Low complexity" evidence="5">
    <location>
        <begin position="501"/>
        <end position="519"/>
    </location>
</feature>
<feature type="compositionally biased region" description="Pro residues" evidence="5">
    <location>
        <begin position="574"/>
        <end position="583"/>
    </location>
</feature>
<feature type="compositionally biased region" description="Polar residues" evidence="5">
    <location>
        <begin position="586"/>
        <end position="600"/>
    </location>
</feature>
<feature type="compositionally biased region" description="Low complexity" evidence="5">
    <location>
        <begin position="627"/>
        <end position="646"/>
    </location>
</feature>
<feature type="modified residue" description="Phosphoserine" evidence="3">
    <location>
        <position position="69"/>
    </location>
</feature>
<feature type="modified residue" description="Phosphoserine" evidence="9">
    <location>
        <position position="195"/>
    </location>
</feature>
<feature type="modified residue" description="Phosphoserine" evidence="3">
    <location>
        <position position="498"/>
    </location>
</feature>
<feature type="modified residue" description="Phosphoserine" evidence="8 9">
    <location>
        <position position="526"/>
    </location>
</feature>
<feature type="modified residue" description="Phosphoserine" evidence="3">
    <location>
        <position position="618"/>
    </location>
</feature>
<feature type="modified residue" description="Phosphoserine" evidence="7 9">
    <location>
        <position position="636"/>
    </location>
</feature>
<feature type="modified residue" description="Phosphoserine" evidence="3">
    <location>
        <position position="637"/>
    </location>
</feature>
<feature type="modified residue" description="Phosphoserine" evidence="7 9">
    <location>
        <position position="638"/>
    </location>
</feature>
<feature type="modified residue" description="Phosphoserine" evidence="7 9">
    <location>
        <position position="641"/>
    </location>
</feature>
<feature type="cross-link" description="Glycyl lysine isopeptide (Lys-Gly) (interchain with G-Cter in SUMO2)" evidence="3">
    <location>
        <position position="79"/>
    </location>
</feature>
<feature type="sequence conflict" description="In Ref. 3; BAC38621." evidence="6" ref="3">
    <original>G</original>
    <variation>E</variation>
    <location>
        <position position="226"/>
    </location>
</feature>
<feature type="sequence conflict" description="In Ref. 3; BAE32550." evidence="6" ref="3">
    <original>G</original>
    <variation>E</variation>
    <location>
        <position position="227"/>
    </location>
</feature>
<feature type="sequence conflict" description="In Ref. 3; BAC27955." evidence="6" ref="3">
    <original>A</original>
    <variation>P</variation>
    <location>
        <position position="330"/>
    </location>
</feature>
<feature type="sequence conflict" description="In Ref. 3; BAC27955." evidence="6" ref="3">
    <original>E</original>
    <variation>G</variation>
    <location>
        <position position="442"/>
    </location>
</feature>
<feature type="sequence conflict" description="In Ref. 3; BAE33226/BAE42208." evidence="6" ref="3">
    <original>P</original>
    <variation>S</variation>
    <location>
        <position position="619"/>
    </location>
</feature>
<comment type="function">
    <text evidence="2 3">Probable E3 ubiquitin protein ligase involved in the proteasome-mediated ubiquitin-dependent degradation of target proteins. Through the degradation of CTNNB1, functions downstream of FOXF2 to negatively regulate the Wnt signaling pathway. Probably plays a role in the development of the central nervous system and in neuronal maintenance (By similarity). Also acts as a transcriptional regulator of genes controlling female reproductive function. May play a role in gene transcription by transactivating GNRH1 promoter and repressing PENK promoter (By similarity).</text>
</comment>
<comment type="catalytic activity">
    <reaction evidence="3">
        <text>S-ubiquitinyl-[E2 ubiquitin-conjugating enzyme]-L-cysteine + [acceptor protein]-L-lysine = [E2 ubiquitin-conjugating enzyme]-L-cysteine + N(6)-ubiquitinyl-[acceptor protein]-L-lysine.</text>
        <dbReference type="EC" id="2.3.2.27"/>
    </reaction>
</comment>
<comment type="pathway">
    <text evidence="3">Protein modification; protein ubiquitination.</text>
</comment>
<comment type="subunit">
    <text evidence="3">Interacts with CTNNB1.</text>
</comment>
<comment type="subcellular location">
    <subcellularLocation>
        <location evidence="1 2">Nucleus</location>
    </subcellularLocation>
</comment>
<comment type="similarity">
    <text evidence="6">Belongs to the IRF2BP family.</text>
</comment>
<comment type="sequence caution" evidence="6">
    <conflict type="erroneous initiation">
        <sequence resource="EMBL-CDS" id="BAD32560"/>
    </conflict>
    <text>Extended N-terminus.</text>
</comment>